<protein>
    <recommendedName>
        <fullName evidence="3">Hexuronate transporter</fullName>
    </recommendedName>
    <alternativeName>
        <fullName evidence="4">Aldohexuronate transport system</fullName>
    </alternativeName>
</protein>
<name>EXUT_BACSU</name>
<comment type="function">
    <text evidence="5">Transport of aldohexuronates such as D-glucuronate and D-galacturonate.</text>
</comment>
<comment type="catalytic activity">
    <reaction evidence="5">
        <text>aldehydo-D-glucuronate(in) + H(+)(in) = aldehydo-D-glucuronate(out) + H(+)(out)</text>
        <dbReference type="Rhea" id="RHEA:28955"/>
        <dbReference type="ChEBI" id="CHEBI:15378"/>
        <dbReference type="ChEBI" id="CHEBI:142686"/>
    </reaction>
</comment>
<comment type="catalytic activity">
    <reaction evidence="5">
        <text>aldehydo-D-galacturonate(out) + H(+)(out) = aldehydo-D-galacturonate(in) + H(+)(in)</text>
        <dbReference type="Rhea" id="RHEA:29295"/>
        <dbReference type="ChEBI" id="CHEBI:12952"/>
        <dbReference type="ChEBI" id="CHEBI:15378"/>
    </reaction>
</comment>
<comment type="subcellular location">
    <subcellularLocation>
        <location evidence="4">Cell membrane</location>
        <topology evidence="1">Multi-pass membrane protein</topology>
    </subcellularLocation>
</comment>
<comment type="induction">
    <text evidence="5">Induced by galacturonate, repressed by glucose.</text>
</comment>
<comment type="miscellaneous">
    <text>Member of the exu locus which is required for galacturonate utilization.</text>
</comment>
<comment type="similarity">
    <text evidence="4">Belongs to the major facilitator superfamily. Phthalate permease family.</text>
</comment>
<reference key="1">
    <citation type="journal article" date="1998" name="Microbiology">
        <title>A 35.7 kb DNA fragment from the Bacillus subtilis chromosome containing a putative 12.3 kb operon involved in hexuronate catabolism and a perfectly symmetrical hypothetical catabolite-responsive element.</title>
        <authorList>
            <person name="Rivolta C."/>
            <person name="Soldo B."/>
            <person name="Lazarevic V."/>
            <person name="Joris B."/>
            <person name="Mauel C."/>
            <person name="Karamata D."/>
        </authorList>
    </citation>
    <scope>NUCLEOTIDE SEQUENCE [GENOMIC DNA]</scope>
    <scope>PROBABLE OPERON STRUCTURE</scope>
    <source>
        <strain>168</strain>
    </source>
</reference>
<reference key="2">
    <citation type="journal article" date="1997" name="Nature">
        <title>The complete genome sequence of the Gram-positive bacterium Bacillus subtilis.</title>
        <authorList>
            <person name="Kunst F."/>
            <person name="Ogasawara N."/>
            <person name="Moszer I."/>
            <person name="Albertini A.M."/>
            <person name="Alloni G."/>
            <person name="Azevedo V."/>
            <person name="Bertero M.G."/>
            <person name="Bessieres P."/>
            <person name="Bolotin A."/>
            <person name="Borchert S."/>
            <person name="Borriss R."/>
            <person name="Boursier L."/>
            <person name="Brans A."/>
            <person name="Braun M."/>
            <person name="Brignell S.C."/>
            <person name="Bron S."/>
            <person name="Brouillet S."/>
            <person name="Bruschi C.V."/>
            <person name="Caldwell B."/>
            <person name="Capuano V."/>
            <person name="Carter N.M."/>
            <person name="Choi S.-K."/>
            <person name="Codani J.-J."/>
            <person name="Connerton I.F."/>
            <person name="Cummings N.J."/>
            <person name="Daniel R.A."/>
            <person name="Denizot F."/>
            <person name="Devine K.M."/>
            <person name="Duesterhoeft A."/>
            <person name="Ehrlich S.D."/>
            <person name="Emmerson P.T."/>
            <person name="Entian K.-D."/>
            <person name="Errington J."/>
            <person name="Fabret C."/>
            <person name="Ferrari E."/>
            <person name="Foulger D."/>
            <person name="Fritz C."/>
            <person name="Fujita M."/>
            <person name="Fujita Y."/>
            <person name="Fuma S."/>
            <person name="Galizzi A."/>
            <person name="Galleron N."/>
            <person name="Ghim S.-Y."/>
            <person name="Glaser P."/>
            <person name="Goffeau A."/>
            <person name="Golightly E.J."/>
            <person name="Grandi G."/>
            <person name="Guiseppi G."/>
            <person name="Guy B.J."/>
            <person name="Haga K."/>
            <person name="Haiech J."/>
            <person name="Harwood C.R."/>
            <person name="Henaut A."/>
            <person name="Hilbert H."/>
            <person name="Holsappel S."/>
            <person name="Hosono S."/>
            <person name="Hullo M.-F."/>
            <person name="Itaya M."/>
            <person name="Jones L.-M."/>
            <person name="Joris B."/>
            <person name="Karamata D."/>
            <person name="Kasahara Y."/>
            <person name="Klaerr-Blanchard M."/>
            <person name="Klein C."/>
            <person name="Kobayashi Y."/>
            <person name="Koetter P."/>
            <person name="Koningstein G."/>
            <person name="Krogh S."/>
            <person name="Kumano M."/>
            <person name="Kurita K."/>
            <person name="Lapidus A."/>
            <person name="Lardinois S."/>
            <person name="Lauber J."/>
            <person name="Lazarevic V."/>
            <person name="Lee S.-M."/>
            <person name="Levine A."/>
            <person name="Liu H."/>
            <person name="Masuda S."/>
            <person name="Mauel C."/>
            <person name="Medigue C."/>
            <person name="Medina N."/>
            <person name="Mellado R.P."/>
            <person name="Mizuno M."/>
            <person name="Moestl D."/>
            <person name="Nakai S."/>
            <person name="Noback M."/>
            <person name="Noone D."/>
            <person name="O'Reilly M."/>
            <person name="Ogawa K."/>
            <person name="Ogiwara A."/>
            <person name="Oudega B."/>
            <person name="Park S.-H."/>
            <person name="Parro V."/>
            <person name="Pohl T.M."/>
            <person name="Portetelle D."/>
            <person name="Porwollik S."/>
            <person name="Prescott A.M."/>
            <person name="Presecan E."/>
            <person name="Pujic P."/>
            <person name="Purnelle B."/>
            <person name="Rapoport G."/>
            <person name="Rey M."/>
            <person name="Reynolds S."/>
            <person name="Rieger M."/>
            <person name="Rivolta C."/>
            <person name="Rocha E."/>
            <person name="Roche B."/>
            <person name="Rose M."/>
            <person name="Sadaie Y."/>
            <person name="Sato T."/>
            <person name="Scanlan E."/>
            <person name="Schleich S."/>
            <person name="Schroeter R."/>
            <person name="Scoffone F."/>
            <person name="Sekiguchi J."/>
            <person name="Sekowska A."/>
            <person name="Seror S.J."/>
            <person name="Serror P."/>
            <person name="Shin B.-S."/>
            <person name="Soldo B."/>
            <person name="Sorokin A."/>
            <person name="Tacconi E."/>
            <person name="Takagi T."/>
            <person name="Takahashi H."/>
            <person name="Takemaru K."/>
            <person name="Takeuchi M."/>
            <person name="Tamakoshi A."/>
            <person name="Tanaka T."/>
            <person name="Terpstra P."/>
            <person name="Tognoni A."/>
            <person name="Tosato V."/>
            <person name="Uchiyama S."/>
            <person name="Vandenbol M."/>
            <person name="Vannier F."/>
            <person name="Vassarotti A."/>
            <person name="Viari A."/>
            <person name="Wambutt R."/>
            <person name="Wedler E."/>
            <person name="Wedler H."/>
            <person name="Weitzenegger T."/>
            <person name="Winters P."/>
            <person name="Wipat A."/>
            <person name="Yamamoto H."/>
            <person name="Yamane K."/>
            <person name="Yasumoto K."/>
            <person name="Yata K."/>
            <person name="Yoshida K."/>
            <person name="Yoshikawa H.-F."/>
            <person name="Zumstein E."/>
            <person name="Yoshikawa H."/>
            <person name="Danchin A."/>
        </authorList>
    </citation>
    <scope>NUCLEOTIDE SEQUENCE [LARGE SCALE GENOMIC DNA]</scope>
    <source>
        <strain>168</strain>
    </source>
</reference>
<reference key="3">
    <citation type="journal article" date="1999" name="J. Bacteriol.">
        <title>Regulation of hexuronate utilization in Bacillus subtilis.</title>
        <authorList>
            <person name="Mekjian K.R."/>
            <person name="Bryan E.M."/>
            <person name="Beall B.W."/>
            <person name="Moran C.P. Jr."/>
        </authorList>
    </citation>
    <scope>PROBABLE OPERON STRUCTURE</scope>
    <scope>INDUCTION</scope>
    <source>
        <strain>168 / MB24</strain>
    </source>
</reference>
<feature type="chain" id="PRO_0000121381" description="Hexuronate transporter">
    <location>
        <begin position="1"/>
        <end position="422"/>
    </location>
</feature>
<feature type="transmembrane region" description="Helical" evidence="1">
    <location>
        <begin position="9"/>
        <end position="29"/>
    </location>
</feature>
<feature type="transmembrane region" description="Helical" evidence="1">
    <location>
        <begin position="45"/>
        <end position="65"/>
    </location>
</feature>
<feature type="transmembrane region" description="Helical" evidence="1">
    <location>
        <begin position="82"/>
        <end position="102"/>
    </location>
</feature>
<feature type="transmembrane region" description="Helical" evidence="1">
    <location>
        <begin position="141"/>
        <end position="161"/>
    </location>
</feature>
<feature type="transmembrane region" description="Helical" evidence="1">
    <location>
        <begin position="163"/>
        <end position="183"/>
    </location>
</feature>
<feature type="transmembrane region" description="Helical" evidence="1">
    <location>
        <begin position="219"/>
        <end position="239"/>
    </location>
</feature>
<feature type="transmembrane region" description="Helical" evidence="1">
    <location>
        <begin position="256"/>
        <end position="276"/>
    </location>
</feature>
<feature type="transmembrane region" description="Helical" evidence="1">
    <location>
        <begin position="294"/>
        <end position="314"/>
    </location>
</feature>
<feature type="transmembrane region" description="Helical" evidence="1">
    <location>
        <begin position="321"/>
        <end position="341"/>
    </location>
</feature>
<feature type="transmembrane region" description="Helical" evidence="1">
    <location>
        <begin position="356"/>
        <end position="376"/>
    </location>
</feature>
<feature type="transmembrane region" description="Helical" evidence="1">
    <location>
        <begin position="381"/>
        <end position="401"/>
    </location>
</feature>
<proteinExistence type="evidence at transcript level"/>
<keyword id="KW-1003">Cell membrane</keyword>
<keyword id="KW-0472">Membrane</keyword>
<keyword id="KW-1185">Reference proteome</keyword>
<keyword id="KW-0812">Transmembrane</keyword>
<keyword id="KW-1133">Transmembrane helix</keyword>
<keyword id="KW-0813">Transport</keyword>
<gene>
    <name evidence="2" type="primary">exuT</name>
    <name type="synonym">yjmG</name>
    <name type="ordered locus">BSU12360</name>
</gene>
<dbReference type="EMBL" id="AF015825">
    <property type="protein sequence ID" value="AAC46332.1"/>
    <property type="molecule type" value="Genomic_DNA"/>
</dbReference>
<dbReference type="EMBL" id="AL009126">
    <property type="protein sequence ID" value="CAB13093.1"/>
    <property type="molecule type" value="Genomic_DNA"/>
</dbReference>
<dbReference type="PIR" id="A69853">
    <property type="entry name" value="A69853"/>
</dbReference>
<dbReference type="RefSeq" id="NP_389118.1">
    <property type="nucleotide sequence ID" value="NC_000964.3"/>
</dbReference>
<dbReference type="RefSeq" id="WP_003245531.1">
    <property type="nucleotide sequence ID" value="NZ_OZ025638.1"/>
</dbReference>
<dbReference type="SMR" id="O34456"/>
<dbReference type="FunCoup" id="O34456">
    <property type="interactions" value="254"/>
</dbReference>
<dbReference type="STRING" id="224308.BSU12360"/>
<dbReference type="PaxDb" id="224308-BSU12360"/>
<dbReference type="EnsemblBacteria" id="CAB13093">
    <property type="protein sequence ID" value="CAB13093"/>
    <property type="gene ID" value="BSU_12360"/>
</dbReference>
<dbReference type="GeneID" id="939405"/>
<dbReference type="KEGG" id="bsu:BSU12360"/>
<dbReference type="PATRIC" id="fig|224308.179.peg.1337"/>
<dbReference type="eggNOG" id="COG2271">
    <property type="taxonomic scope" value="Bacteria"/>
</dbReference>
<dbReference type="InParanoid" id="O34456"/>
<dbReference type="OrthoDB" id="6360at2"/>
<dbReference type="PhylomeDB" id="O34456"/>
<dbReference type="BioCyc" id="BSUB:BSU12360-MONOMER"/>
<dbReference type="Proteomes" id="UP000001570">
    <property type="component" value="Chromosome"/>
</dbReference>
<dbReference type="GO" id="GO:0005886">
    <property type="term" value="C:plasma membrane"/>
    <property type="evidence" value="ECO:0007669"/>
    <property type="project" value="UniProtKB-SubCell"/>
</dbReference>
<dbReference type="GO" id="GO:0022857">
    <property type="term" value="F:transmembrane transporter activity"/>
    <property type="evidence" value="ECO:0007669"/>
    <property type="project" value="InterPro"/>
</dbReference>
<dbReference type="CDD" id="cd17319">
    <property type="entry name" value="MFS_ExuT_GudP_like"/>
    <property type="match status" value="1"/>
</dbReference>
<dbReference type="Gene3D" id="1.20.1250.20">
    <property type="entry name" value="MFS general substrate transporter like domains"/>
    <property type="match status" value="2"/>
</dbReference>
<dbReference type="InterPro" id="IPR011701">
    <property type="entry name" value="MFS"/>
</dbReference>
<dbReference type="InterPro" id="IPR020846">
    <property type="entry name" value="MFS_dom"/>
</dbReference>
<dbReference type="InterPro" id="IPR050382">
    <property type="entry name" value="MFS_Na/Anion_cotransporter"/>
</dbReference>
<dbReference type="InterPro" id="IPR036259">
    <property type="entry name" value="MFS_trans_sf"/>
</dbReference>
<dbReference type="InterPro" id="IPR000849">
    <property type="entry name" value="Sugar_P_transporter"/>
</dbReference>
<dbReference type="NCBIfam" id="TIGR00893">
    <property type="entry name" value="2A0114"/>
    <property type="match status" value="1"/>
</dbReference>
<dbReference type="PANTHER" id="PTHR11662:SF399">
    <property type="entry name" value="FI19708P1-RELATED"/>
    <property type="match status" value="1"/>
</dbReference>
<dbReference type="PANTHER" id="PTHR11662">
    <property type="entry name" value="SOLUTE CARRIER FAMILY 17"/>
    <property type="match status" value="1"/>
</dbReference>
<dbReference type="Pfam" id="PF07690">
    <property type="entry name" value="MFS_1"/>
    <property type="match status" value="1"/>
</dbReference>
<dbReference type="PIRSF" id="PIRSF002808">
    <property type="entry name" value="Hexose_phosphate_transp"/>
    <property type="match status" value="1"/>
</dbReference>
<dbReference type="SUPFAM" id="SSF103473">
    <property type="entry name" value="MFS general substrate transporter"/>
    <property type="match status" value="1"/>
</dbReference>
<dbReference type="PROSITE" id="PS50850">
    <property type="entry name" value="MFS"/>
    <property type="match status" value="1"/>
</dbReference>
<sequence>MFSKDKLPVILFLFLAGVINYLDRSALSIAAPFIQDDLTLSATQMGLIFSSFSIGYAIFNFLGGVASDRYGAKLTLFVAMVVWSLFSGAVALAFGFVSLLIIRILFGMGEGPLSATINKMVNNWFPPTQRASVIGVTNSGTPLGGAISGPIVGMIAVAFSWKVSFVLIMIIGLIWAVLWFKFVKEKPQETIKEAPAIKAETSPGEKIPLTFYLKQKTVLFTAFAFFAYNYILFFFLTWFPSYLVDERGLSVESMSVITVIPWILGFIGLAAGGFVSDYVYKKTARKGVLFSRKVVLVTCLFSSAVLIGFAGLVATTAGAVTLVALSVFFLYLTGAIYWAVIQDVVDQNNVGSVGGFMHFLANTAGIIGPALTGFIVDQTGTFSGAFLLAGGLAVFASLAVIRFVRPIIGKPAGTEAENPVSY</sequence>
<organism>
    <name type="scientific">Bacillus subtilis (strain 168)</name>
    <dbReference type="NCBI Taxonomy" id="224308"/>
    <lineage>
        <taxon>Bacteria</taxon>
        <taxon>Bacillati</taxon>
        <taxon>Bacillota</taxon>
        <taxon>Bacilli</taxon>
        <taxon>Bacillales</taxon>
        <taxon>Bacillaceae</taxon>
        <taxon>Bacillus</taxon>
    </lineage>
</organism>
<evidence type="ECO:0000255" key="1"/>
<evidence type="ECO:0000303" key="2">
    <source>
    </source>
</evidence>
<evidence type="ECO:0000303" key="3">
    <source>
    </source>
</evidence>
<evidence type="ECO:0000305" key="4"/>
<evidence type="ECO:0000305" key="5">
    <source>
    </source>
</evidence>
<accession>O34456</accession>